<dbReference type="EC" id="2.4.1.18" evidence="1"/>
<dbReference type="EMBL" id="AP008229">
    <property type="protein sequence ID" value="BAE66928.1"/>
    <property type="molecule type" value="Genomic_DNA"/>
</dbReference>
<dbReference type="SMR" id="Q2P949"/>
<dbReference type="CAZy" id="CBM48">
    <property type="family name" value="Carbohydrate-Binding Module Family 48"/>
</dbReference>
<dbReference type="CAZy" id="GH13">
    <property type="family name" value="Glycoside Hydrolase Family 13"/>
</dbReference>
<dbReference type="KEGG" id="xom:XOO0173"/>
<dbReference type="HOGENOM" id="CLU_004245_3_2_6"/>
<dbReference type="UniPathway" id="UPA00164"/>
<dbReference type="GO" id="GO:0005829">
    <property type="term" value="C:cytosol"/>
    <property type="evidence" value="ECO:0007669"/>
    <property type="project" value="TreeGrafter"/>
</dbReference>
<dbReference type="GO" id="GO:0003844">
    <property type="term" value="F:1,4-alpha-glucan branching enzyme activity"/>
    <property type="evidence" value="ECO:0007669"/>
    <property type="project" value="UniProtKB-UniRule"/>
</dbReference>
<dbReference type="GO" id="GO:0043169">
    <property type="term" value="F:cation binding"/>
    <property type="evidence" value="ECO:0007669"/>
    <property type="project" value="InterPro"/>
</dbReference>
<dbReference type="GO" id="GO:0004553">
    <property type="term" value="F:hydrolase activity, hydrolyzing O-glycosyl compounds"/>
    <property type="evidence" value="ECO:0007669"/>
    <property type="project" value="InterPro"/>
</dbReference>
<dbReference type="GO" id="GO:0005978">
    <property type="term" value="P:glycogen biosynthetic process"/>
    <property type="evidence" value="ECO:0007669"/>
    <property type="project" value="UniProtKB-UniRule"/>
</dbReference>
<dbReference type="CDD" id="cd11322">
    <property type="entry name" value="AmyAc_Glg_BE"/>
    <property type="match status" value="1"/>
</dbReference>
<dbReference type="CDD" id="cd02855">
    <property type="entry name" value="E_set_GBE_prok_N"/>
    <property type="match status" value="1"/>
</dbReference>
<dbReference type="FunFam" id="2.60.40.10:FF:000169">
    <property type="entry name" value="1,4-alpha-glucan branching enzyme GlgB"/>
    <property type="match status" value="1"/>
</dbReference>
<dbReference type="FunFam" id="2.60.40.1180:FF:000002">
    <property type="entry name" value="1,4-alpha-glucan branching enzyme GlgB"/>
    <property type="match status" value="1"/>
</dbReference>
<dbReference type="FunFam" id="3.20.20.80:FF:000003">
    <property type="entry name" value="1,4-alpha-glucan branching enzyme GlgB"/>
    <property type="match status" value="1"/>
</dbReference>
<dbReference type="Gene3D" id="3.20.20.80">
    <property type="entry name" value="Glycosidases"/>
    <property type="match status" value="1"/>
</dbReference>
<dbReference type="Gene3D" id="2.60.40.1180">
    <property type="entry name" value="Golgi alpha-mannosidase II"/>
    <property type="match status" value="1"/>
</dbReference>
<dbReference type="Gene3D" id="2.60.40.10">
    <property type="entry name" value="Immunoglobulins"/>
    <property type="match status" value="2"/>
</dbReference>
<dbReference type="HAMAP" id="MF_00685">
    <property type="entry name" value="GlgB"/>
    <property type="match status" value="1"/>
</dbReference>
<dbReference type="InterPro" id="IPR006048">
    <property type="entry name" value="A-amylase/branching_C"/>
</dbReference>
<dbReference type="InterPro" id="IPR037439">
    <property type="entry name" value="Branching_enzy"/>
</dbReference>
<dbReference type="InterPro" id="IPR006407">
    <property type="entry name" value="GlgB"/>
</dbReference>
<dbReference type="InterPro" id="IPR054169">
    <property type="entry name" value="GlgB_N"/>
</dbReference>
<dbReference type="InterPro" id="IPR044143">
    <property type="entry name" value="GlgB_N_E_set_prok"/>
</dbReference>
<dbReference type="InterPro" id="IPR006047">
    <property type="entry name" value="Glyco_hydro_13_cat_dom"/>
</dbReference>
<dbReference type="InterPro" id="IPR004193">
    <property type="entry name" value="Glyco_hydro_13_N"/>
</dbReference>
<dbReference type="InterPro" id="IPR013780">
    <property type="entry name" value="Glyco_hydro_b"/>
</dbReference>
<dbReference type="InterPro" id="IPR017853">
    <property type="entry name" value="Glycoside_hydrolase_SF"/>
</dbReference>
<dbReference type="InterPro" id="IPR013783">
    <property type="entry name" value="Ig-like_fold"/>
</dbReference>
<dbReference type="InterPro" id="IPR014756">
    <property type="entry name" value="Ig_E-set"/>
</dbReference>
<dbReference type="NCBIfam" id="TIGR01515">
    <property type="entry name" value="branching_enzym"/>
    <property type="match status" value="1"/>
</dbReference>
<dbReference type="NCBIfam" id="NF003811">
    <property type="entry name" value="PRK05402.1"/>
    <property type="match status" value="1"/>
</dbReference>
<dbReference type="NCBIfam" id="NF008967">
    <property type="entry name" value="PRK12313.1"/>
    <property type="match status" value="1"/>
</dbReference>
<dbReference type="PANTHER" id="PTHR43651">
    <property type="entry name" value="1,4-ALPHA-GLUCAN-BRANCHING ENZYME"/>
    <property type="match status" value="1"/>
</dbReference>
<dbReference type="PANTHER" id="PTHR43651:SF3">
    <property type="entry name" value="1,4-ALPHA-GLUCAN-BRANCHING ENZYME"/>
    <property type="match status" value="1"/>
</dbReference>
<dbReference type="Pfam" id="PF00128">
    <property type="entry name" value="Alpha-amylase"/>
    <property type="match status" value="1"/>
</dbReference>
<dbReference type="Pfam" id="PF02806">
    <property type="entry name" value="Alpha-amylase_C"/>
    <property type="match status" value="1"/>
</dbReference>
<dbReference type="Pfam" id="PF02922">
    <property type="entry name" value="CBM_48"/>
    <property type="match status" value="1"/>
</dbReference>
<dbReference type="Pfam" id="PF22019">
    <property type="entry name" value="GlgB_N"/>
    <property type="match status" value="1"/>
</dbReference>
<dbReference type="PIRSF" id="PIRSF000463">
    <property type="entry name" value="GlgB"/>
    <property type="match status" value="1"/>
</dbReference>
<dbReference type="SMART" id="SM00642">
    <property type="entry name" value="Aamy"/>
    <property type="match status" value="1"/>
</dbReference>
<dbReference type="SUPFAM" id="SSF51445">
    <property type="entry name" value="(Trans)glycosidases"/>
    <property type="match status" value="1"/>
</dbReference>
<dbReference type="SUPFAM" id="SSF81296">
    <property type="entry name" value="E set domains"/>
    <property type="match status" value="1"/>
</dbReference>
<dbReference type="SUPFAM" id="SSF51011">
    <property type="entry name" value="Glycosyl hydrolase domain"/>
    <property type="match status" value="1"/>
</dbReference>
<reference key="1">
    <citation type="journal article" date="2005" name="Jpn. Agric. Res. Q.">
        <title>Genome sequence of Xanthomonas oryzae pv. oryzae suggests contribution of large numbers of effector genes and insertion sequences to its race diversity.</title>
        <authorList>
            <person name="Ochiai H."/>
            <person name="Inoue Y."/>
            <person name="Takeya M."/>
            <person name="Sasaki A."/>
            <person name="Kaku H."/>
        </authorList>
    </citation>
    <scope>NUCLEOTIDE SEQUENCE [LARGE SCALE GENOMIC DNA]</scope>
    <source>
        <strain>MAFF 311018</strain>
    </source>
</reference>
<gene>
    <name evidence="1" type="primary">glgB2</name>
    <name type="ordered locus">XOO0173</name>
</gene>
<name>GLGB2_XANOM</name>
<proteinExistence type="inferred from homology"/>
<accession>Q2P949</accession>
<keyword id="KW-0119">Carbohydrate metabolism</keyword>
<keyword id="KW-0320">Glycogen biosynthesis</keyword>
<keyword id="KW-0321">Glycogen metabolism</keyword>
<keyword id="KW-0328">Glycosyltransferase</keyword>
<keyword id="KW-0808">Transferase</keyword>
<sequence>MSGVMTAVSNRWDPGVIRALAEARHGDAFAVLGAHRTDTGRVLRTYLPGAERVSAVLDDGQTIALEAGPEPGLFAGDLPAQGGYRLRIGWPGGEQDTADPYAFGPQLSDFDLHLISEGHHLQLADALGANVVEVDGVRGTRFAVWAPNASRVAVVGDFNSWDARRHPMRLRHQSGVWELFVPDVGPGAHYKYQLRGPHGHELPAKADPVARRAELAPGTASIVADPTPYQWSDDGWMATRARRQAHDAPMSVYEMHAGSWLREEGVDLDWDGLADRLIPYVADMGFTHVELMPVTEHPFGGSWGYQPLGLFAPTARFGTPDGFARFVDRCHREGIGVIVDWVPAHFPTDAHGLAHFDGTALYEHADPREGFHRDWNTLIYNHGRREVSGFLIASAMEFLQRYHVDGLRVDAVASMLYRDYSRNAGEWVPNIHGGRENYETIAFLRRLNALVREHTPGAVMIAEESTAFPGVTADVAHGGLGFHYKWNMGWMHDTLHYAGLDPIYRRYHHGELTFSMVYAYSERFVLPISHDEVVHGKGSLLGRMPGDDWQRFANLRAYLGFMFTHPGRKLLFMGCEFGQPTEWNHDSGLPWHLLDDPRHRGVQTLVRDVNRLYVQYPALHAHDDDPSGFAWVVGDDAGNSVVAFLRKGKRGDAPVLVVINFTPVVQHGYRIGVPQGGQWREVFNSDAGIYGGANLGNGGIVTAEQQSMHGHAHALPLLLPPLGAIVLTPPG</sequence>
<comment type="function">
    <text evidence="1">Catalyzes the formation of the alpha-1,6-glucosidic linkages in glycogen by scission of a 1,4-alpha-linked oligosaccharide from growing alpha-1,4-glucan chains and the subsequent attachment of the oligosaccharide to the alpha-1,6 position.</text>
</comment>
<comment type="catalytic activity">
    <reaction evidence="1">
        <text>Transfers a segment of a (1-&gt;4)-alpha-D-glucan chain to a primary hydroxy group in a similar glucan chain.</text>
        <dbReference type="EC" id="2.4.1.18"/>
    </reaction>
</comment>
<comment type="pathway">
    <text evidence="1">Glycan biosynthesis; glycogen biosynthesis.</text>
</comment>
<comment type="subunit">
    <text evidence="1">Monomer.</text>
</comment>
<comment type="similarity">
    <text evidence="1">Belongs to the glycosyl hydrolase 13 family. GlgB subfamily.</text>
</comment>
<feature type="chain" id="PRO_0000260719" description="1,4-alpha-glucan branching enzyme GlgB 2">
    <location>
        <begin position="1"/>
        <end position="731"/>
    </location>
</feature>
<feature type="active site" description="Nucleophile" evidence="1">
    <location>
        <position position="410"/>
    </location>
</feature>
<feature type="active site" description="Proton donor" evidence="1">
    <location>
        <position position="463"/>
    </location>
</feature>
<organism>
    <name type="scientific">Xanthomonas oryzae pv. oryzae (strain MAFF 311018)</name>
    <dbReference type="NCBI Taxonomy" id="342109"/>
    <lineage>
        <taxon>Bacteria</taxon>
        <taxon>Pseudomonadati</taxon>
        <taxon>Pseudomonadota</taxon>
        <taxon>Gammaproteobacteria</taxon>
        <taxon>Lysobacterales</taxon>
        <taxon>Lysobacteraceae</taxon>
        <taxon>Xanthomonas</taxon>
    </lineage>
</organism>
<evidence type="ECO:0000255" key="1">
    <source>
        <dbReference type="HAMAP-Rule" id="MF_00685"/>
    </source>
</evidence>
<protein>
    <recommendedName>
        <fullName evidence="1">1,4-alpha-glucan branching enzyme GlgB 2</fullName>
        <ecNumber evidence="1">2.4.1.18</ecNumber>
    </recommendedName>
    <alternativeName>
        <fullName evidence="1">1,4-alpha-D-glucan:1,4-alpha-D-glucan 6-glucosyl-transferase 2</fullName>
    </alternativeName>
    <alternativeName>
        <fullName evidence="1">Alpha-(1-&gt;4)-glucan branching enzyme 2</fullName>
    </alternativeName>
    <alternativeName>
        <fullName evidence="1">Glycogen branching enzyme 2</fullName>
        <shortName evidence="1">BE 2</shortName>
    </alternativeName>
</protein>